<keyword id="KW-1185">Reference proteome</keyword>
<keyword id="KW-0687">Ribonucleoprotein</keyword>
<keyword id="KW-0689">Ribosomal protein</keyword>
<keyword id="KW-0694">RNA-binding</keyword>
<keyword id="KW-0699">rRNA-binding</keyword>
<sequence length="106" mass="11341">MNKIRKGDEVIVIAGRDKGKRGTVSLRKDDSHVLVDGINLVKKHTKPNPLKGTTGGIVEKSMPIHQSNVAIFNAATGKADRVGIKLLADGKKVRVFKSSGDEIKAA</sequence>
<reference key="1">
    <citation type="journal article" date="2008" name="Appl. Environ. Microbiol.">
        <title>The genome of Polaromonas sp. strain JS666: insights into the evolution of a hydrocarbon- and xenobiotic-degrading bacterium, and features of relevance to biotechnology.</title>
        <authorList>
            <person name="Mattes T.E."/>
            <person name="Alexander A.K."/>
            <person name="Richardson P.M."/>
            <person name="Munk A.C."/>
            <person name="Han C.S."/>
            <person name="Stothard P."/>
            <person name="Coleman N.V."/>
        </authorList>
    </citation>
    <scope>NUCLEOTIDE SEQUENCE [LARGE SCALE GENOMIC DNA]</scope>
    <source>
        <strain>JS666 / ATCC BAA-500</strain>
    </source>
</reference>
<name>RL24_POLSJ</name>
<proteinExistence type="inferred from homology"/>
<comment type="function">
    <text evidence="1">One of two assembly initiator proteins, it binds directly to the 5'-end of the 23S rRNA, where it nucleates assembly of the 50S subunit.</text>
</comment>
<comment type="function">
    <text evidence="1">One of the proteins that surrounds the polypeptide exit tunnel on the outside of the subunit.</text>
</comment>
<comment type="subunit">
    <text evidence="1">Part of the 50S ribosomal subunit.</text>
</comment>
<comment type="similarity">
    <text evidence="1">Belongs to the universal ribosomal protein uL24 family.</text>
</comment>
<feature type="chain" id="PRO_1000052275" description="Large ribosomal subunit protein uL24">
    <location>
        <begin position="1"/>
        <end position="106"/>
    </location>
</feature>
<protein>
    <recommendedName>
        <fullName evidence="1">Large ribosomal subunit protein uL24</fullName>
    </recommendedName>
    <alternativeName>
        <fullName evidence="2">50S ribosomal protein L24</fullName>
    </alternativeName>
</protein>
<organism>
    <name type="scientific">Polaromonas sp. (strain JS666 / ATCC BAA-500)</name>
    <dbReference type="NCBI Taxonomy" id="296591"/>
    <lineage>
        <taxon>Bacteria</taxon>
        <taxon>Pseudomonadati</taxon>
        <taxon>Pseudomonadota</taxon>
        <taxon>Betaproteobacteria</taxon>
        <taxon>Burkholderiales</taxon>
        <taxon>Comamonadaceae</taxon>
        <taxon>Polaromonas</taxon>
    </lineage>
</organism>
<gene>
    <name evidence="1" type="primary">rplX</name>
    <name type="ordered locus">Bpro_0486</name>
</gene>
<accession>Q12G92</accession>
<evidence type="ECO:0000255" key="1">
    <source>
        <dbReference type="HAMAP-Rule" id="MF_01326"/>
    </source>
</evidence>
<evidence type="ECO:0000305" key="2"/>
<dbReference type="EMBL" id="CP000316">
    <property type="protein sequence ID" value="ABE42450.1"/>
    <property type="molecule type" value="Genomic_DNA"/>
</dbReference>
<dbReference type="RefSeq" id="WP_011481456.1">
    <property type="nucleotide sequence ID" value="NC_007948.1"/>
</dbReference>
<dbReference type="SMR" id="Q12G92"/>
<dbReference type="STRING" id="296591.Bpro_0486"/>
<dbReference type="KEGG" id="pol:Bpro_0486"/>
<dbReference type="eggNOG" id="COG0198">
    <property type="taxonomic scope" value="Bacteria"/>
</dbReference>
<dbReference type="HOGENOM" id="CLU_093315_2_2_4"/>
<dbReference type="OrthoDB" id="9807419at2"/>
<dbReference type="Proteomes" id="UP000001983">
    <property type="component" value="Chromosome"/>
</dbReference>
<dbReference type="GO" id="GO:1990904">
    <property type="term" value="C:ribonucleoprotein complex"/>
    <property type="evidence" value="ECO:0007669"/>
    <property type="project" value="UniProtKB-KW"/>
</dbReference>
<dbReference type="GO" id="GO:0005840">
    <property type="term" value="C:ribosome"/>
    <property type="evidence" value="ECO:0007669"/>
    <property type="project" value="UniProtKB-KW"/>
</dbReference>
<dbReference type="GO" id="GO:0019843">
    <property type="term" value="F:rRNA binding"/>
    <property type="evidence" value="ECO:0007669"/>
    <property type="project" value="UniProtKB-UniRule"/>
</dbReference>
<dbReference type="GO" id="GO:0003735">
    <property type="term" value="F:structural constituent of ribosome"/>
    <property type="evidence" value="ECO:0007669"/>
    <property type="project" value="InterPro"/>
</dbReference>
<dbReference type="GO" id="GO:0006412">
    <property type="term" value="P:translation"/>
    <property type="evidence" value="ECO:0007669"/>
    <property type="project" value="UniProtKB-UniRule"/>
</dbReference>
<dbReference type="CDD" id="cd06089">
    <property type="entry name" value="KOW_RPL26"/>
    <property type="match status" value="1"/>
</dbReference>
<dbReference type="FunFam" id="2.30.30.30:FF:000004">
    <property type="entry name" value="50S ribosomal protein L24"/>
    <property type="match status" value="1"/>
</dbReference>
<dbReference type="Gene3D" id="2.30.30.30">
    <property type="match status" value="1"/>
</dbReference>
<dbReference type="HAMAP" id="MF_01326_B">
    <property type="entry name" value="Ribosomal_uL24_B"/>
    <property type="match status" value="1"/>
</dbReference>
<dbReference type="InterPro" id="IPR005824">
    <property type="entry name" value="KOW"/>
</dbReference>
<dbReference type="InterPro" id="IPR014722">
    <property type="entry name" value="Rib_uL2_dom2"/>
</dbReference>
<dbReference type="InterPro" id="IPR003256">
    <property type="entry name" value="Ribosomal_uL24"/>
</dbReference>
<dbReference type="InterPro" id="IPR005825">
    <property type="entry name" value="Ribosomal_uL24_CS"/>
</dbReference>
<dbReference type="InterPro" id="IPR041988">
    <property type="entry name" value="Ribosomal_uL24_KOW"/>
</dbReference>
<dbReference type="InterPro" id="IPR008991">
    <property type="entry name" value="Translation_prot_SH3-like_sf"/>
</dbReference>
<dbReference type="NCBIfam" id="TIGR01079">
    <property type="entry name" value="rplX_bact"/>
    <property type="match status" value="1"/>
</dbReference>
<dbReference type="PANTHER" id="PTHR12903">
    <property type="entry name" value="MITOCHONDRIAL RIBOSOMAL PROTEIN L24"/>
    <property type="match status" value="1"/>
</dbReference>
<dbReference type="Pfam" id="PF00467">
    <property type="entry name" value="KOW"/>
    <property type="match status" value="1"/>
</dbReference>
<dbReference type="Pfam" id="PF17136">
    <property type="entry name" value="ribosomal_L24"/>
    <property type="match status" value="1"/>
</dbReference>
<dbReference type="SMART" id="SM00739">
    <property type="entry name" value="KOW"/>
    <property type="match status" value="1"/>
</dbReference>
<dbReference type="SUPFAM" id="SSF50104">
    <property type="entry name" value="Translation proteins SH3-like domain"/>
    <property type="match status" value="1"/>
</dbReference>
<dbReference type="PROSITE" id="PS01108">
    <property type="entry name" value="RIBOSOMAL_L24"/>
    <property type="match status" value="1"/>
</dbReference>